<keyword id="KW-1185">Reference proteome</keyword>
<keyword id="KW-0677">Repeat</keyword>
<keyword id="KW-0833">Ubl conjugation pathway</keyword>
<keyword id="KW-0853">WD repeat</keyword>
<reference key="1">
    <citation type="submission" date="2004-01" db="EMBL/GenBank/DDBJ databases">
        <authorList>
            <consortium name="NIH - Xenopus Gene Collection (XGC) project"/>
        </authorList>
    </citation>
    <scope>NUCLEOTIDE SEQUENCE [LARGE SCALE MRNA]</scope>
    <source>
        <tissue>Embryo</tissue>
    </source>
</reference>
<organism>
    <name type="scientific">Xenopus tropicalis</name>
    <name type="common">Western clawed frog</name>
    <name type="synonym">Silurana tropicalis</name>
    <dbReference type="NCBI Taxonomy" id="8364"/>
    <lineage>
        <taxon>Eukaryota</taxon>
        <taxon>Metazoa</taxon>
        <taxon>Chordata</taxon>
        <taxon>Craniata</taxon>
        <taxon>Vertebrata</taxon>
        <taxon>Euteleostomi</taxon>
        <taxon>Amphibia</taxon>
        <taxon>Batrachia</taxon>
        <taxon>Anura</taxon>
        <taxon>Pipoidea</taxon>
        <taxon>Pipidae</taxon>
        <taxon>Xenopodinae</taxon>
        <taxon>Xenopus</taxon>
        <taxon>Silurana</taxon>
    </lineage>
</organism>
<accession>Q6P1V3</accession>
<feature type="chain" id="PRO_0000347228" description="WD repeat and SOCS box-containing protein 1">
    <location>
        <begin position="1"/>
        <end position="422"/>
    </location>
</feature>
<feature type="repeat" description="WD 1">
    <location>
        <begin position="124"/>
        <end position="165"/>
    </location>
</feature>
<feature type="repeat" description="WD 2">
    <location>
        <begin position="168"/>
        <end position="208"/>
    </location>
</feature>
<feature type="repeat" description="WD 3">
    <location>
        <begin position="212"/>
        <end position="251"/>
    </location>
</feature>
<feature type="repeat" description="WD 4">
    <location>
        <begin position="254"/>
        <end position="293"/>
    </location>
</feature>
<feature type="repeat" description="WD 5">
    <location>
        <begin position="309"/>
        <end position="346"/>
    </location>
</feature>
<feature type="domain" description="SOCS box" evidence="2">
    <location>
        <begin position="374"/>
        <end position="422"/>
    </location>
</feature>
<proteinExistence type="evidence at transcript level"/>
<evidence type="ECO:0000250" key="1"/>
<evidence type="ECO:0000255" key="2">
    <source>
        <dbReference type="PROSITE-ProRule" id="PRU00194"/>
    </source>
</evidence>
<sequence>MASFPDFVNENEIARSRTIGELITPTSPFEQKYGRENWTVAFAPDGSYFAWSQGHRIVKLVPWSRCLKNFTACSTKNGVNLTNGRLSRQNSDLGQRNKPIEHTIDCGDIVWSLAFGSSVPEKQSRCVNIEWHRFKFGQDQLLLATGLSNGRIKIWDVYTGKLLLNLMDHTEVVRDLTFAPDGSLILVSASRDKTLRVWDLKDDGNMMKVLRGHQNWVYCCAFSPDSSMLCSVGAGKAVFLWDMDKYTMIRKLDGHYNDVVACEFSPDGALLATASYDTRVYVWDPHIGSILFEFGHLFPPPTPIFAGGDNGRWVKSVSFSHDGVHIASLADDNLVRFWRIDKSYPVEVAPLSKGLCCAFSTDGSVLAAGTQDGNAYFWSTPKYVSSLQHLCRMAIRRVMNTNEVKKLPIPQKIMEFLTYQTM</sequence>
<comment type="function">
    <text evidence="1">Probable substrate-recognition component of a SCF-like ECS (Elongin-Cullin-SOCS-box protein) E3 ubiquitin-protein ligase complex which mediates the ubiquitination and subsequent proteasomal degradation of target proteins.</text>
</comment>
<comment type="pathway">
    <text>Protein modification; protein ubiquitination.</text>
</comment>
<comment type="subunit">
    <text evidence="1">Component of a probable ECS E3 ubiquitin-protein ligase complex that contains the Elongin BC complex.</text>
</comment>
<comment type="domain">
    <text evidence="1">The SOCS box domain mediates the interaction with the Elongin BC complex, an adapter module in different E3 ubiquitin ligase complexes.</text>
</comment>
<dbReference type="EMBL" id="BC064858">
    <property type="protein sequence ID" value="AAH64858.1"/>
    <property type="molecule type" value="mRNA"/>
</dbReference>
<dbReference type="RefSeq" id="NP_989387.1">
    <property type="nucleotide sequence ID" value="NM_204056.1"/>
</dbReference>
<dbReference type="SMR" id="Q6P1V3"/>
<dbReference type="FunCoup" id="Q6P1V3">
    <property type="interactions" value="893"/>
</dbReference>
<dbReference type="STRING" id="8364.ENSXETP00000018602"/>
<dbReference type="PaxDb" id="8364-ENSXETP00000046179"/>
<dbReference type="DNASU" id="395021"/>
<dbReference type="GeneID" id="395021"/>
<dbReference type="KEGG" id="xtr:395021"/>
<dbReference type="AGR" id="Xenbase:XB-GENE-5920309"/>
<dbReference type="CTD" id="26118"/>
<dbReference type="Xenbase" id="XB-GENE-5920309">
    <property type="gene designation" value="wsb1"/>
</dbReference>
<dbReference type="eggNOG" id="KOG0266">
    <property type="taxonomic scope" value="Eukaryota"/>
</dbReference>
<dbReference type="HOGENOM" id="CLU_056876_0_0_1"/>
<dbReference type="InParanoid" id="Q6P1V3"/>
<dbReference type="OMA" id="YVWDPHT"/>
<dbReference type="OrthoDB" id="538223at2759"/>
<dbReference type="PhylomeDB" id="Q6P1V3"/>
<dbReference type="TreeFam" id="TF329216"/>
<dbReference type="Reactome" id="R-XTR-8951664">
    <property type="pathway name" value="Neddylation"/>
</dbReference>
<dbReference type="Reactome" id="R-XTR-983168">
    <property type="pathway name" value="Antigen processing: Ubiquitination &amp; Proteasome degradation"/>
</dbReference>
<dbReference type="UniPathway" id="UPA00143"/>
<dbReference type="Proteomes" id="UP000008143">
    <property type="component" value="Chromosome 2"/>
</dbReference>
<dbReference type="Bgee" id="ENSXETG00000021353">
    <property type="expression patterns" value="Expressed in testis and 22 other cell types or tissues"/>
</dbReference>
<dbReference type="GO" id="GO:0035556">
    <property type="term" value="P:intracellular signal transduction"/>
    <property type="evidence" value="ECO:0007669"/>
    <property type="project" value="InterPro"/>
</dbReference>
<dbReference type="GO" id="GO:0016567">
    <property type="term" value="P:protein ubiquitination"/>
    <property type="evidence" value="ECO:0007669"/>
    <property type="project" value="UniProtKB-UniPathway"/>
</dbReference>
<dbReference type="CDD" id="cd03746">
    <property type="entry name" value="SOCS_WSB1_SWIP1"/>
    <property type="match status" value="1"/>
</dbReference>
<dbReference type="CDD" id="cd00200">
    <property type="entry name" value="WD40"/>
    <property type="match status" value="1"/>
</dbReference>
<dbReference type="Gene3D" id="1.10.750.20">
    <property type="entry name" value="SOCS box"/>
    <property type="match status" value="1"/>
</dbReference>
<dbReference type="Gene3D" id="2.130.10.10">
    <property type="entry name" value="YVTN repeat-like/Quinoprotein amine dehydrogenase"/>
    <property type="match status" value="2"/>
</dbReference>
<dbReference type="InterPro" id="IPR020472">
    <property type="entry name" value="G-protein_beta_WD-40_rep"/>
</dbReference>
<dbReference type="InterPro" id="IPR001496">
    <property type="entry name" value="SOCS_box"/>
</dbReference>
<dbReference type="InterPro" id="IPR036036">
    <property type="entry name" value="SOCS_box-like_dom_sf"/>
</dbReference>
<dbReference type="InterPro" id="IPR015943">
    <property type="entry name" value="WD40/YVTN_repeat-like_dom_sf"/>
</dbReference>
<dbReference type="InterPro" id="IPR019775">
    <property type="entry name" value="WD40_repeat_CS"/>
</dbReference>
<dbReference type="InterPro" id="IPR036322">
    <property type="entry name" value="WD40_repeat_dom_sf"/>
</dbReference>
<dbReference type="InterPro" id="IPR001680">
    <property type="entry name" value="WD40_rpt"/>
</dbReference>
<dbReference type="InterPro" id="IPR051983">
    <property type="entry name" value="WSB_SOCS-box_domain"/>
</dbReference>
<dbReference type="PANTHER" id="PTHR15622:SF12">
    <property type="entry name" value="WD REPEAT AND SOCS BOX-CONTAINING PROTEIN 1"/>
    <property type="match status" value="1"/>
</dbReference>
<dbReference type="PANTHER" id="PTHR15622">
    <property type="entry name" value="WD40 REPEAT PROTEIN"/>
    <property type="match status" value="1"/>
</dbReference>
<dbReference type="Pfam" id="PF07525">
    <property type="entry name" value="SOCS_box"/>
    <property type="match status" value="1"/>
</dbReference>
<dbReference type="Pfam" id="PF00400">
    <property type="entry name" value="WD40"/>
    <property type="match status" value="5"/>
</dbReference>
<dbReference type="PRINTS" id="PR00320">
    <property type="entry name" value="GPROTEINBRPT"/>
</dbReference>
<dbReference type="SMART" id="SM00253">
    <property type="entry name" value="SOCS"/>
    <property type="match status" value="1"/>
</dbReference>
<dbReference type="SMART" id="SM00969">
    <property type="entry name" value="SOCS_box"/>
    <property type="match status" value="1"/>
</dbReference>
<dbReference type="SMART" id="SM00320">
    <property type="entry name" value="WD40"/>
    <property type="match status" value="6"/>
</dbReference>
<dbReference type="SUPFAM" id="SSF158235">
    <property type="entry name" value="SOCS box-like"/>
    <property type="match status" value="1"/>
</dbReference>
<dbReference type="SUPFAM" id="SSF50978">
    <property type="entry name" value="WD40 repeat-like"/>
    <property type="match status" value="1"/>
</dbReference>
<dbReference type="PROSITE" id="PS50225">
    <property type="entry name" value="SOCS"/>
    <property type="match status" value="1"/>
</dbReference>
<dbReference type="PROSITE" id="PS00678">
    <property type="entry name" value="WD_REPEATS_1"/>
    <property type="match status" value="2"/>
</dbReference>
<dbReference type="PROSITE" id="PS50082">
    <property type="entry name" value="WD_REPEATS_2"/>
    <property type="match status" value="5"/>
</dbReference>
<dbReference type="PROSITE" id="PS50294">
    <property type="entry name" value="WD_REPEATS_REGION"/>
    <property type="match status" value="1"/>
</dbReference>
<protein>
    <recommendedName>
        <fullName>WD repeat and SOCS box-containing protein 1</fullName>
        <shortName>WSB-1</shortName>
    </recommendedName>
</protein>
<name>WSB1_XENTR</name>
<gene>
    <name type="primary">wsb1</name>
</gene>